<feature type="chain" id="PRO_0000462585" description="Competence protein ComFC">
    <location>
        <begin position="1"/>
        <end position="220"/>
    </location>
</feature>
<dbReference type="EMBL" id="AE007317">
    <property type="protein sequence ID" value="AAL00814.1"/>
    <property type="molecule type" value="Genomic_DNA"/>
</dbReference>
<dbReference type="PIR" id="A99523">
    <property type="entry name" value="A99523"/>
</dbReference>
<dbReference type="RefSeq" id="NP_359603.1">
    <property type="nucleotide sequence ID" value="NC_003098.1"/>
</dbReference>
<dbReference type="RefSeq" id="WP_000649974.1">
    <property type="nucleotide sequence ID" value="NC_003098.1"/>
</dbReference>
<dbReference type="STRING" id="171101.spr2012"/>
<dbReference type="KEGG" id="spr:spr2012"/>
<dbReference type="PATRIC" id="fig|171101.6.peg.2177"/>
<dbReference type="eggNOG" id="COG1040">
    <property type="taxonomic scope" value="Bacteria"/>
</dbReference>
<dbReference type="HOGENOM" id="CLU_054549_4_0_9"/>
<dbReference type="Proteomes" id="UP000000586">
    <property type="component" value="Chromosome"/>
</dbReference>
<dbReference type="CDD" id="cd06223">
    <property type="entry name" value="PRTases_typeI"/>
    <property type="match status" value="1"/>
</dbReference>
<dbReference type="Gene3D" id="3.40.50.2020">
    <property type="match status" value="1"/>
</dbReference>
<dbReference type="InterPro" id="IPR051910">
    <property type="entry name" value="ComF/GntX_DNA_util-trans"/>
</dbReference>
<dbReference type="InterPro" id="IPR000836">
    <property type="entry name" value="PRibTrfase_dom"/>
</dbReference>
<dbReference type="InterPro" id="IPR029057">
    <property type="entry name" value="PRTase-like"/>
</dbReference>
<dbReference type="PANTHER" id="PTHR47505">
    <property type="entry name" value="DNA UTILIZATION PROTEIN YHGH"/>
    <property type="match status" value="1"/>
</dbReference>
<dbReference type="PANTHER" id="PTHR47505:SF1">
    <property type="entry name" value="DNA UTILIZATION PROTEIN YHGH"/>
    <property type="match status" value="1"/>
</dbReference>
<dbReference type="Pfam" id="PF00156">
    <property type="entry name" value="Pribosyltran"/>
    <property type="match status" value="1"/>
</dbReference>
<dbReference type="SUPFAM" id="SSF53271">
    <property type="entry name" value="PRTase-like"/>
    <property type="match status" value="1"/>
</dbReference>
<sequence>MKCLLCGQTMKTVLTFSSLLLLRNDDSCLCSDCDSTFERIGEENCPNCMKTELSTKCQDCQLWCKEGVGVSHRAIFTYNQAMKDFFSRYKFDGDFLLRKVFASFLSEELKKYKEYQFVVIPLSPDRYANRGFNQVEGLVEAAGFEYLDLLEKREERASSSKNRSERLGTELPFFIKSGVTIPKKILLIDDIYTTGATINRVKKLLEEAGAKDVKTFSLVR</sequence>
<evidence type="ECO:0000269" key="1">
    <source>
    </source>
</evidence>
<evidence type="ECO:0000305" key="2"/>
<evidence type="ECO:0000305" key="3">
    <source>
    </source>
</evidence>
<evidence type="ECO:0000312" key="4">
    <source>
        <dbReference type="EMBL" id="AAL00814.1"/>
    </source>
</evidence>
<comment type="function">
    <text evidence="3">Involved in transformation (genetic competence for DNA uptake).</text>
</comment>
<comment type="subunit">
    <text evidence="1">Monomer and dimer in solution. Interacts with ComFA and DprA; ComFA-ComFC form rings about 150 Angstroms in diameter with apparent 6-fold symmetry (PubMed:28618091).</text>
</comment>
<comment type="domain">
    <text evidence="1">Oligomerizes via its C-terminal domain (residues 94-220).</text>
</comment>
<comment type="disruption phenotype">
    <text evidence="1">Over 1000-fold decrease in transformation efficiency.</text>
</comment>
<comment type="similarity">
    <text evidence="2">Belongs to the ComF/GntX family.</text>
</comment>
<protein>
    <recommendedName>
        <fullName evidence="2">Competence protein ComFC</fullName>
    </recommendedName>
    <alternativeName>
        <fullName>ComF operon protein 3</fullName>
    </alternativeName>
</protein>
<reference evidence="4" key="1">
    <citation type="journal article" date="2001" name="J. Bacteriol.">
        <title>Genome of the bacterium Streptococcus pneumoniae strain R6.</title>
        <authorList>
            <person name="Hoskins J."/>
            <person name="Alborn W.E. Jr."/>
            <person name="Arnold J."/>
            <person name="Blaszczak L.C."/>
            <person name="Burgett S."/>
            <person name="DeHoff B.S."/>
            <person name="Estrem S.T."/>
            <person name="Fritz L."/>
            <person name="Fu D.-J."/>
            <person name="Fuller W."/>
            <person name="Geringer C."/>
            <person name="Gilmour R."/>
            <person name="Glass J.S."/>
            <person name="Khoja H."/>
            <person name="Kraft A.R."/>
            <person name="Lagace R.E."/>
            <person name="LeBlanc D.J."/>
            <person name="Lee L.N."/>
            <person name="Lefkowitz E.J."/>
            <person name="Lu J."/>
            <person name="Matsushima P."/>
            <person name="McAhren S.M."/>
            <person name="McHenney M."/>
            <person name="McLeaster K."/>
            <person name="Mundy C.W."/>
            <person name="Nicas T.I."/>
            <person name="Norris F.H."/>
            <person name="O'Gara M."/>
            <person name="Peery R.B."/>
            <person name="Robertson G.T."/>
            <person name="Rockey P."/>
            <person name="Sun P.-M."/>
            <person name="Winkler M.E."/>
            <person name="Yang Y."/>
            <person name="Young-Bellido M."/>
            <person name="Zhao G."/>
            <person name="Zook C.A."/>
            <person name="Baltz R.H."/>
            <person name="Jaskunas S.R."/>
            <person name="Rosteck P.R. Jr."/>
            <person name="Skatrud P.L."/>
            <person name="Glass J.I."/>
        </authorList>
    </citation>
    <scope>NUCLEOTIDE SEQUENCE [LARGE SCALE GENOMIC DNA]</scope>
    <source>
        <strain>ATCC BAA-255 / R6</strain>
    </source>
</reference>
<reference key="2">
    <citation type="journal article" date="2017" name="Mol. Microbiol.">
        <title>Bacterial transformation: ComFA is a DNA-dependent ATPase that forms complexes with ComFC and DprA.</title>
        <authorList>
            <person name="Diallo A."/>
            <person name="Foster H.R."/>
            <person name="Gromek K.A."/>
            <person name="Perry T.N."/>
            <person name="Dujeancourt A."/>
            <person name="Krasteva P.V."/>
            <person name="Gubellini F."/>
            <person name="Falbel T.G."/>
            <person name="Burton B.M."/>
            <person name="Fronzes R."/>
        </authorList>
    </citation>
    <scope>FUNCTION</scope>
    <scope>INTERACTION WITH COMFA</scope>
    <scope>SUBUNIT</scope>
    <scope>DOMAIN</scope>
    <scope>DISRUPTION PHENOTYPE</scope>
    <source>
        <strain>R6 / R800</strain>
    </source>
</reference>
<gene>
    <name evidence="4" type="primary">comFC</name>
    <name evidence="4" type="ordered locus">spr2012</name>
</gene>
<proteinExistence type="evidence at protein level"/>
<keyword id="KW-0178">Competence</keyword>
<keyword id="KW-1185">Reference proteome</keyword>
<organism>
    <name type="scientific">Streptococcus pneumoniae (strain ATCC BAA-255 / R6)</name>
    <dbReference type="NCBI Taxonomy" id="171101"/>
    <lineage>
        <taxon>Bacteria</taxon>
        <taxon>Bacillati</taxon>
        <taxon>Bacillota</taxon>
        <taxon>Bacilli</taxon>
        <taxon>Lactobacillales</taxon>
        <taxon>Streptococcaceae</taxon>
        <taxon>Streptococcus</taxon>
    </lineage>
</organism>
<name>COMFC_STRR6</name>
<accession>Q8CWN0</accession>